<comment type="function">
    <text evidence="1">Involved in DNA repair and RecF pathway recombination.</text>
</comment>
<comment type="similarity">
    <text evidence="1">Belongs to the RecO family.</text>
</comment>
<name>RECO_CERS5</name>
<reference key="1">
    <citation type="submission" date="2007-04" db="EMBL/GenBank/DDBJ databases">
        <title>Complete sequence of chromosome of Rhodobacter sphaeroides ATCC 17025.</title>
        <authorList>
            <consortium name="US DOE Joint Genome Institute"/>
            <person name="Copeland A."/>
            <person name="Lucas S."/>
            <person name="Lapidus A."/>
            <person name="Barry K."/>
            <person name="Detter J.C."/>
            <person name="Glavina del Rio T."/>
            <person name="Hammon N."/>
            <person name="Israni S."/>
            <person name="Dalin E."/>
            <person name="Tice H."/>
            <person name="Pitluck S."/>
            <person name="Chertkov O."/>
            <person name="Brettin T."/>
            <person name="Bruce D."/>
            <person name="Han C."/>
            <person name="Schmutz J."/>
            <person name="Larimer F."/>
            <person name="Land M."/>
            <person name="Hauser L."/>
            <person name="Kyrpides N."/>
            <person name="Kim E."/>
            <person name="Richardson P."/>
            <person name="Mackenzie C."/>
            <person name="Choudhary M."/>
            <person name="Donohue T.J."/>
            <person name="Kaplan S."/>
        </authorList>
    </citation>
    <scope>NUCLEOTIDE SEQUENCE [LARGE SCALE GENOMIC DNA]</scope>
    <source>
        <strain>ATCC 17025 / ATH 2.4.3</strain>
    </source>
</reference>
<accession>A4WVP2</accession>
<organism>
    <name type="scientific">Cereibacter sphaeroides (strain ATCC 17025 / ATH 2.4.3)</name>
    <name type="common">Rhodobacter sphaeroides</name>
    <dbReference type="NCBI Taxonomy" id="349102"/>
    <lineage>
        <taxon>Bacteria</taxon>
        <taxon>Pseudomonadati</taxon>
        <taxon>Pseudomonadota</taxon>
        <taxon>Alphaproteobacteria</taxon>
        <taxon>Rhodobacterales</taxon>
        <taxon>Paracoccaceae</taxon>
        <taxon>Cereibacter</taxon>
    </lineage>
</organism>
<keyword id="KW-0227">DNA damage</keyword>
<keyword id="KW-0233">DNA recombination</keyword>
<keyword id="KW-0234">DNA repair</keyword>
<sequence>MLEWRDEGALLSVRRHGESAAIIEVFTASHGRHLGVVRGGASRRHAPVLQPGAQLDLTWKARLDDHMGAFTVEPLRARTGIFGDRLALAGLNAICAMLHVVLPEREPHVGLWRESIELMDALAAPGWPAAYLRWEMRLLEEAGFGLDLTRCAVTGSREDLAFVSPRTGRAVGRAAAGDWADRLFPLPLALLGQGPASGPEVRQGLAITGHFLARELPLAGRPLPEARARLIDLLARG</sequence>
<protein>
    <recommendedName>
        <fullName evidence="1">DNA repair protein RecO</fullName>
    </recommendedName>
    <alternativeName>
        <fullName evidence="1">Recombination protein O</fullName>
    </alternativeName>
</protein>
<proteinExistence type="inferred from homology"/>
<dbReference type="EMBL" id="CP000661">
    <property type="protein sequence ID" value="ABP71456.1"/>
    <property type="molecule type" value="Genomic_DNA"/>
</dbReference>
<dbReference type="SMR" id="A4WVP2"/>
<dbReference type="STRING" id="349102.Rsph17025_2568"/>
<dbReference type="KEGG" id="rsq:Rsph17025_2568"/>
<dbReference type="eggNOG" id="COG1381">
    <property type="taxonomic scope" value="Bacteria"/>
</dbReference>
<dbReference type="HOGENOM" id="CLU_086029_0_0_5"/>
<dbReference type="BioCyc" id="RSPH349102:G1G8M-2647-MONOMER"/>
<dbReference type="GO" id="GO:0043590">
    <property type="term" value="C:bacterial nucleoid"/>
    <property type="evidence" value="ECO:0007669"/>
    <property type="project" value="TreeGrafter"/>
</dbReference>
<dbReference type="GO" id="GO:0006310">
    <property type="term" value="P:DNA recombination"/>
    <property type="evidence" value="ECO:0007669"/>
    <property type="project" value="UniProtKB-UniRule"/>
</dbReference>
<dbReference type="GO" id="GO:0006302">
    <property type="term" value="P:double-strand break repair"/>
    <property type="evidence" value="ECO:0007669"/>
    <property type="project" value="TreeGrafter"/>
</dbReference>
<dbReference type="Gene3D" id="2.40.50.140">
    <property type="entry name" value="Nucleic acid-binding proteins"/>
    <property type="match status" value="1"/>
</dbReference>
<dbReference type="Gene3D" id="1.20.1440.120">
    <property type="entry name" value="Recombination protein O, C-terminal domain"/>
    <property type="match status" value="1"/>
</dbReference>
<dbReference type="HAMAP" id="MF_00201">
    <property type="entry name" value="RecO"/>
    <property type="match status" value="1"/>
</dbReference>
<dbReference type="InterPro" id="IPR037278">
    <property type="entry name" value="ARFGAP/RecO"/>
</dbReference>
<dbReference type="InterPro" id="IPR022572">
    <property type="entry name" value="DNA_rep/recomb_RecO_N"/>
</dbReference>
<dbReference type="InterPro" id="IPR012340">
    <property type="entry name" value="NA-bd_OB-fold"/>
</dbReference>
<dbReference type="InterPro" id="IPR003717">
    <property type="entry name" value="RecO"/>
</dbReference>
<dbReference type="InterPro" id="IPR042242">
    <property type="entry name" value="RecO_C"/>
</dbReference>
<dbReference type="NCBIfam" id="TIGR00613">
    <property type="entry name" value="reco"/>
    <property type="match status" value="1"/>
</dbReference>
<dbReference type="PANTHER" id="PTHR33991">
    <property type="entry name" value="DNA REPAIR PROTEIN RECO"/>
    <property type="match status" value="1"/>
</dbReference>
<dbReference type="PANTHER" id="PTHR33991:SF1">
    <property type="entry name" value="DNA REPAIR PROTEIN RECO"/>
    <property type="match status" value="1"/>
</dbReference>
<dbReference type="Pfam" id="PF02565">
    <property type="entry name" value="RecO_C"/>
    <property type="match status" value="1"/>
</dbReference>
<dbReference type="Pfam" id="PF11967">
    <property type="entry name" value="RecO_N"/>
    <property type="match status" value="1"/>
</dbReference>
<dbReference type="SUPFAM" id="SSF57863">
    <property type="entry name" value="ArfGap/RecO-like zinc finger"/>
    <property type="match status" value="1"/>
</dbReference>
<dbReference type="SUPFAM" id="SSF50249">
    <property type="entry name" value="Nucleic acid-binding proteins"/>
    <property type="match status" value="1"/>
</dbReference>
<gene>
    <name evidence="1" type="primary">recO</name>
    <name type="ordered locus">Rsph17025_2568</name>
</gene>
<evidence type="ECO:0000255" key="1">
    <source>
        <dbReference type="HAMAP-Rule" id="MF_00201"/>
    </source>
</evidence>
<feature type="chain" id="PRO_0000325209" description="DNA repair protein RecO">
    <location>
        <begin position="1"/>
        <end position="237"/>
    </location>
</feature>